<sequence>MADQLTEEQIAEFKEAFSLFDKDGDGTITTKELGTVMRSLGQNPTEAELQDMINEVDADGNGTIDFPEFLTMMARKMKDTDSEEEILEAFKVFDKDGNGFISAAELRHIMTNLGEKLTDEEVDEMIREADIDGDGQINYEEFVKMMMSK</sequence>
<feature type="chain" id="PRO_0000260281" description="Calmodulin">
    <location>
        <begin position="1"/>
        <end position="149"/>
    </location>
</feature>
<feature type="domain" description="EF-hand 1" evidence="2">
    <location>
        <begin position="8"/>
        <end position="43"/>
    </location>
</feature>
<feature type="domain" description="EF-hand 2" evidence="2">
    <location>
        <begin position="44"/>
        <end position="79"/>
    </location>
</feature>
<feature type="domain" description="EF-hand 3" evidence="2">
    <location>
        <begin position="81"/>
        <end position="116"/>
    </location>
</feature>
<feature type="domain" description="EF-hand 4" evidence="2">
    <location>
        <begin position="117"/>
        <end position="149"/>
    </location>
</feature>
<feature type="binding site" evidence="2">
    <location>
        <position position="21"/>
    </location>
    <ligand>
        <name>Ca(2+)</name>
        <dbReference type="ChEBI" id="CHEBI:29108"/>
        <label>1</label>
    </ligand>
</feature>
<feature type="binding site" evidence="2">
    <location>
        <position position="23"/>
    </location>
    <ligand>
        <name>Ca(2+)</name>
        <dbReference type="ChEBI" id="CHEBI:29108"/>
        <label>1</label>
    </ligand>
</feature>
<feature type="binding site" evidence="2">
    <location>
        <position position="25"/>
    </location>
    <ligand>
        <name>Ca(2+)</name>
        <dbReference type="ChEBI" id="CHEBI:29108"/>
        <label>1</label>
    </ligand>
</feature>
<feature type="binding site" evidence="2">
    <location>
        <position position="27"/>
    </location>
    <ligand>
        <name>Ca(2+)</name>
        <dbReference type="ChEBI" id="CHEBI:29108"/>
        <label>1</label>
    </ligand>
</feature>
<feature type="binding site" evidence="2">
    <location>
        <position position="32"/>
    </location>
    <ligand>
        <name>Ca(2+)</name>
        <dbReference type="ChEBI" id="CHEBI:29108"/>
        <label>1</label>
    </ligand>
</feature>
<feature type="binding site" evidence="2">
    <location>
        <position position="57"/>
    </location>
    <ligand>
        <name>Ca(2+)</name>
        <dbReference type="ChEBI" id="CHEBI:29108"/>
        <label>2</label>
    </ligand>
</feature>
<feature type="binding site" evidence="2">
    <location>
        <position position="59"/>
    </location>
    <ligand>
        <name>Ca(2+)</name>
        <dbReference type="ChEBI" id="CHEBI:29108"/>
        <label>2</label>
    </ligand>
</feature>
<feature type="binding site" evidence="2">
    <location>
        <position position="61"/>
    </location>
    <ligand>
        <name>Ca(2+)</name>
        <dbReference type="ChEBI" id="CHEBI:29108"/>
        <label>2</label>
    </ligand>
</feature>
<feature type="binding site" evidence="2">
    <location>
        <position position="63"/>
    </location>
    <ligand>
        <name>Ca(2+)</name>
        <dbReference type="ChEBI" id="CHEBI:29108"/>
        <label>2</label>
    </ligand>
</feature>
<feature type="binding site" evidence="2">
    <location>
        <position position="68"/>
    </location>
    <ligand>
        <name>Ca(2+)</name>
        <dbReference type="ChEBI" id="CHEBI:29108"/>
        <label>2</label>
    </ligand>
</feature>
<feature type="binding site" evidence="2">
    <location>
        <position position="94"/>
    </location>
    <ligand>
        <name>Ca(2+)</name>
        <dbReference type="ChEBI" id="CHEBI:29108"/>
        <label>3</label>
    </ligand>
</feature>
<feature type="binding site" evidence="2">
    <location>
        <position position="96"/>
    </location>
    <ligand>
        <name>Ca(2+)</name>
        <dbReference type="ChEBI" id="CHEBI:29108"/>
        <label>3</label>
    </ligand>
</feature>
<feature type="binding site" evidence="2">
    <location>
        <position position="98"/>
    </location>
    <ligand>
        <name>Ca(2+)</name>
        <dbReference type="ChEBI" id="CHEBI:29108"/>
        <label>3</label>
    </ligand>
</feature>
<feature type="binding site" evidence="2">
    <location>
        <position position="105"/>
    </location>
    <ligand>
        <name>Ca(2+)</name>
        <dbReference type="ChEBI" id="CHEBI:29108"/>
        <label>3</label>
    </ligand>
</feature>
<feature type="binding site" evidence="2">
    <location>
        <position position="130"/>
    </location>
    <ligand>
        <name>Ca(2+)</name>
        <dbReference type="ChEBI" id="CHEBI:29108"/>
        <label>4</label>
    </ligand>
</feature>
<feature type="binding site" evidence="2">
    <location>
        <position position="132"/>
    </location>
    <ligand>
        <name>Ca(2+)</name>
        <dbReference type="ChEBI" id="CHEBI:29108"/>
        <label>4</label>
    </ligand>
</feature>
<feature type="binding site" evidence="2">
    <location>
        <position position="134"/>
    </location>
    <ligand>
        <name>Ca(2+)</name>
        <dbReference type="ChEBI" id="CHEBI:29108"/>
        <label>4</label>
    </ligand>
</feature>
<feature type="binding site" evidence="2">
    <location>
        <position position="136"/>
    </location>
    <ligand>
        <name>Ca(2+)</name>
        <dbReference type="ChEBI" id="CHEBI:29108"/>
        <label>4</label>
    </ligand>
</feature>
<feature type="binding site" evidence="2">
    <location>
        <position position="141"/>
    </location>
    <ligand>
        <name>Ca(2+)</name>
        <dbReference type="ChEBI" id="CHEBI:29108"/>
        <label>4</label>
    </ligand>
</feature>
<comment type="function">
    <text evidence="1">Calmodulin mediates the control of a large number of enzymes, ion channels and other proteins by Ca(2+). Among the enzymes to be stimulated by the calmodulin-Ca(2+) complex are a number of protein kinases and phosphatases (By similarity).</text>
</comment>
<comment type="miscellaneous">
    <text evidence="1">This protein has four functional calcium-binding sites.</text>
</comment>
<comment type="similarity">
    <text evidence="3">Belongs to the calmodulin family.</text>
</comment>
<organism>
    <name type="scientific">Globisporangium splendens</name>
    <name type="common">Leaf rot fungus</name>
    <name type="synonym">Pythium splendens</name>
    <dbReference type="NCBI Taxonomy" id="82926"/>
    <lineage>
        <taxon>Eukaryota</taxon>
        <taxon>Sar</taxon>
        <taxon>Stramenopiles</taxon>
        <taxon>Oomycota</taxon>
        <taxon>Pythiales</taxon>
        <taxon>Pythiaceae</taxon>
        <taxon>Globisporangium</taxon>
    </lineage>
</organism>
<reference key="1">
    <citation type="submission" date="1998-08" db="EMBL/GenBank/DDBJ databases">
        <title>Cloning and characterization of the calmodulin gene from Pythium splendens.</title>
        <authorList>
            <person name="Liou R.F."/>
            <person name="Chang T.Y."/>
        </authorList>
    </citation>
    <scope>NUCLEOTIDE SEQUENCE [MRNA]</scope>
</reference>
<evidence type="ECO:0000250" key="1"/>
<evidence type="ECO:0000255" key="2">
    <source>
        <dbReference type="PROSITE-ProRule" id="PRU00448"/>
    </source>
</evidence>
<evidence type="ECO:0000305" key="3"/>
<protein>
    <recommendedName>
        <fullName>Calmodulin</fullName>
        <shortName>CaM</shortName>
    </recommendedName>
</protein>
<accession>Q71UH5</accession>
<dbReference type="EMBL" id="AF085344">
    <property type="protein sequence ID" value="AAG01043.1"/>
    <property type="molecule type" value="mRNA"/>
</dbReference>
<dbReference type="SMR" id="Q71UH5"/>
<dbReference type="GO" id="GO:0016460">
    <property type="term" value="C:myosin II complex"/>
    <property type="evidence" value="ECO:0007669"/>
    <property type="project" value="TreeGrafter"/>
</dbReference>
<dbReference type="GO" id="GO:0005509">
    <property type="term" value="F:calcium ion binding"/>
    <property type="evidence" value="ECO:0007669"/>
    <property type="project" value="InterPro"/>
</dbReference>
<dbReference type="CDD" id="cd00051">
    <property type="entry name" value="EFh"/>
    <property type="match status" value="2"/>
</dbReference>
<dbReference type="FunFam" id="1.10.238.10:FF:000034">
    <property type="entry name" value="Calmodulin"/>
    <property type="match status" value="1"/>
</dbReference>
<dbReference type="FunFam" id="1.10.238.10:FF:000006">
    <property type="entry name" value="Calmodulin 1"/>
    <property type="match status" value="1"/>
</dbReference>
<dbReference type="Gene3D" id="1.10.238.10">
    <property type="entry name" value="EF-hand"/>
    <property type="match status" value="3"/>
</dbReference>
<dbReference type="InterPro" id="IPR050230">
    <property type="entry name" value="CALM/Myosin/TropC-like"/>
</dbReference>
<dbReference type="InterPro" id="IPR011992">
    <property type="entry name" value="EF-hand-dom_pair"/>
</dbReference>
<dbReference type="InterPro" id="IPR018247">
    <property type="entry name" value="EF_Hand_1_Ca_BS"/>
</dbReference>
<dbReference type="InterPro" id="IPR002048">
    <property type="entry name" value="EF_hand_dom"/>
</dbReference>
<dbReference type="PANTHER" id="PTHR23048:SF0">
    <property type="entry name" value="CALMODULIN LIKE 3"/>
    <property type="match status" value="1"/>
</dbReference>
<dbReference type="PANTHER" id="PTHR23048">
    <property type="entry name" value="MYOSIN LIGHT CHAIN 1, 3"/>
    <property type="match status" value="1"/>
</dbReference>
<dbReference type="Pfam" id="PF13499">
    <property type="entry name" value="EF-hand_7"/>
    <property type="match status" value="2"/>
</dbReference>
<dbReference type="PRINTS" id="PR00450">
    <property type="entry name" value="RECOVERIN"/>
</dbReference>
<dbReference type="SMART" id="SM00054">
    <property type="entry name" value="EFh"/>
    <property type="match status" value="4"/>
</dbReference>
<dbReference type="SMART" id="SM01184">
    <property type="entry name" value="efhand_Ca_insen"/>
    <property type="match status" value="1"/>
</dbReference>
<dbReference type="SUPFAM" id="SSF47473">
    <property type="entry name" value="EF-hand"/>
    <property type="match status" value="1"/>
</dbReference>
<dbReference type="PROSITE" id="PS00018">
    <property type="entry name" value="EF_HAND_1"/>
    <property type="match status" value="4"/>
</dbReference>
<dbReference type="PROSITE" id="PS50222">
    <property type="entry name" value="EF_HAND_2"/>
    <property type="match status" value="4"/>
</dbReference>
<keyword id="KW-0106">Calcium</keyword>
<keyword id="KW-0479">Metal-binding</keyword>
<keyword id="KW-0677">Repeat</keyword>
<proteinExistence type="evidence at transcript level"/>
<name>CALM_GLOSP</name>